<proteinExistence type="evidence at protein level"/>
<gene>
    <name type="primary">CAH1</name>
</gene>
<organism>
    <name type="scientific">Chlamydomonas reinhardtii</name>
    <name type="common">Chlamydomonas smithii</name>
    <dbReference type="NCBI Taxonomy" id="3055"/>
    <lineage>
        <taxon>Eukaryota</taxon>
        <taxon>Viridiplantae</taxon>
        <taxon>Chlorophyta</taxon>
        <taxon>core chlorophytes</taxon>
        <taxon>Chlorophyceae</taxon>
        <taxon>CS clade</taxon>
        <taxon>Chlamydomonadales</taxon>
        <taxon>Chlamydomonadaceae</taxon>
        <taxon>Chlamydomonas</taxon>
    </lineage>
</organism>
<evidence type="ECO:0000250" key="1"/>
<evidence type="ECO:0000255" key="2">
    <source>
        <dbReference type="PROSITE-ProRule" id="PRU01134"/>
    </source>
</evidence>
<evidence type="ECO:0000269" key="3">
    <source>
    </source>
</evidence>
<evidence type="ECO:0000269" key="4">
    <source>
    </source>
</evidence>
<evidence type="ECO:0000305" key="5"/>
<evidence type="ECO:0007829" key="6">
    <source>
        <dbReference type="PDB" id="3B1B"/>
    </source>
</evidence>
<dbReference type="EC" id="4.2.1.1"/>
<dbReference type="EMBL" id="D90206">
    <property type="protein sequence ID" value="BAA14232.2"/>
    <property type="molecule type" value="Genomic_DNA"/>
</dbReference>
<dbReference type="PIR" id="S14187">
    <property type="entry name" value="A35795"/>
</dbReference>
<dbReference type="RefSeq" id="XP_001692291.1">
    <property type="nucleotide sequence ID" value="XM_001692239.1"/>
</dbReference>
<dbReference type="PDB" id="3B1B">
    <property type="method" value="X-ray"/>
    <property type="resolution" value="1.88 A"/>
    <property type="chains" value="A/B=1-377"/>
</dbReference>
<dbReference type="PDBsum" id="3B1B"/>
<dbReference type="SMR" id="P20507"/>
<dbReference type="GlyCosmos" id="P20507">
    <property type="glycosylation" value="3 sites, No reported glycans"/>
</dbReference>
<dbReference type="iPTMnet" id="P20507"/>
<dbReference type="PaxDb" id="3055-EDP04241"/>
<dbReference type="ProMEX" id="P20507"/>
<dbReference type="EnsemblPlants" id="PNW84147">
    <property type="protein sequence ID" value="PNW84147"/>
    <property type="gene ID" value="CHLRE_04g223100v5"/>
</dbReference>
<dbReference type="Gramene" id="PNW84147">
    <property type="protein sequence ID" value="PNW84147"/>
    <property type="gene ID" value="CHLRE_04g223100v5"/>
</dbReference>
<dbReference type="KEGG" id="cre:CHLRE_04g223100v5"/>
<dbReference type="eggNOG" id="KOG0382">
    <property type="taxonomic scope" value="Eukaryota"/>
</dbReference>
<dbReference type="HOGENOM" id="CLU_728358_0_0_1"/>
<dbReference type="OMA" id="HEGHEWE"/>
<dbReference type="OrthoDB" id="545904at2759"/>
<dbReference type="GO" id="GO:0004089">
    <property type="term" value="F:carbonate dehydratase activity"/>
    <property type="evidence" value="ECO:0007669"/>
    <property type="project" value="UniProtKB-EC"/>
</dbReference>
<dbReference type="GO" id="GO:0008270">
    <property type="term" value="F:zinc ion binding"/>
    <property type="evidence" value="ECO:0007669"/>
    <property type="project" value="InterPro"/>
</dbReference>
<dbReference type="CDD" id="cd03124">
    <property type="entry name" value="alpha_CA_prokaryotic_like"/>
    <property type="match status" value="1"/>
</dbReference>
<dbReference type="Gene3D" id="3.10.200.10">
    <property type="entry name" value="Alpha carbonic anhydrase"/>
    <property type="match status" value="1"/>
</dbReference>
<dbReference type="InterPro" id="IPR041891">
    <property type="entry name" value="Alpha_CA_prokaryot-like"/>
</dbReference>
<dbReference type="InterPro" id="IPR001148">
    <property type="entry name" value="CA_dom"/>
</dbReference>
<dbReference type="InterPro" id="IPR036398">
    <property type="entry name" value="CA_dom_sf"/>
</dbReference>
<dbReference type="InterPro" id="IPR023561">
    <property type="entry name" value="Carbonic_anhydrase_a-class"/>
</dbReference>
<dbReference type="InterPro" id="IPR018338">
    <property type="entry name" value="Carbonic_anhydrase_a-class_CS"/>
</dbReference>
<dbReference type="PANTHER" id="PTHR18952">
    <property type="entry name" value="CARBONIC ANHYDRASE"/>
    <property type="match status" value="1"/>
</dbReference>
<dbReference type="PANTHER" id="PTHR18952:SF265">
    <property type="entry name" value="CARBONIC ANHYDRASE"/>
    <property type="match status" value="1"/>
</dbReference>
<dbReference type="Pfam" id="PF00194">
    <property type="entry name" value="Carb_anhydrase"/>
    <property type="match status" value="1"/>
</dbReference>
<dbReference type="SMART" id="SM01057">
    <property type="entry name" value="Carb_anhydrase"/>
    <property type="match status" value="1"/>
</dbReference>
<dbReference type="SUPFAM" id="SSF51069">
    <property type="entry name" value="Carbonic anhydrase"/>
    <property type="match status" value="1"/>
</dbReference>
<dbReference type="PROSITE" id="PS00162">
    <property type="entry name" value="ALPHA_CA_1"/>
    <property type="match status" value="1"/>
</dbReference>
<dbReference type="PROSITE" id="PS51144">
    <property type="entry name" value="ALPHA_CA_2"/>
    <property type="match status" value="1"/>
</dbReference>
<accession>P20507</accession>
<comment type="function">
    <text>Reversible hydration of carbon dioxide.</text>
</comment>
<comment type="catalytic activity">
    <reaction>
        <text>hydrogencarbonate + H(+) = CO2 + H2O</text>
        <dbReference type="Rhea" id="RHEA:10748"/>
        <dbReference type="ChEBI" id="CHEBI:15377"/>
        <dbReference type="ChEBI" id="CHEBI:15378"/>
        <dbReference type="ChEBI" id="CHEBI:16526"/>
        <dbReference type="ChEBI" id="CHEBI:17544"/>
        <dbReference type="EC" id="4.2.1.1"/>
    </reaction>
</comment>
<comment type="cofactor">
    <cofactor>
        <name>Zn(2+)</name>
        <dbReference type="ChEBI" id="CHEBI:29105"/>
    </cofactor>
</comment>
<comment type="subunit">
    <text>Tetramer of two large and two small subunits linked by two disulfide bonds.</text>
</comment>
<comment type="subcellular location">
    <subcellularLocation>
        <location>Periplasm</location>
    </subcellularLocation>
</comment>
<comment type="induction">
    <text>Requires light in addition to a decrease in CO(2) concentration during growth.</text>
</comment>
<comment type="similarity">
    <text evidence="5">Belongs to the alpha-carbonic anhydrase family.</text>
</comment>
<name>CAH1_CHLRE</name>
<reference key="1">
    <citation type="journal article" date="1990" name="Proc. Natl. Acad. Sci. U.S.A.">
        <title>cDNA cloning, sequence, and expression of carbonic anhydrase in Chlamydomonas reinhardtii: regulation by environmental CO2 concentration.</title>
        <authorList>
            <person name="Fukuzawa H."/>
            <person name="Fujiwara S."/>
            <person name="Yamamoto Y."/>
            <person name="Dionisio-Sese M.L."/>
            <person name="Miyachi S."/>
        </authorList>
    </citation>
    <scope>NUCLEOTIDE SEQUENCE [GENOMIC DNA]</scope>
    <scope>PARTIAL PROTEIN SEQUENCE</scope>
</reference>
<reference key="2">
    <citation type="journal article" date="1990" name="Proc. Natl. Acad. Sci. U.S.A.">
        <title>Structure and differential expression of two genes encoding carbonic anhydrase in Chlamydomonas reinhardtii.</title>
        <authorList>
            <person name="Fujiwara S."/>
            <person name="Fukuzawa H."/>
            <person name="Tachiki A."/>
            <person name="Miyachi S."/>
        </authorList>
    </citation>
    <scope>NUCLEOTIDE SEQUENCE [GENOMIC DNA]</scope>
</reference>
<reference key="3">
    <citation type="journal article" date="1990" name="Nucleic Acids Res.">
        <title>Nucleotide sequences of two genes CAH1 and CAH2 which encode carbonic anhydrase polypeptides in Chlamydomonas reinhardtii.</title>
        <authorList>
            <person name="Fukuzawa H."/>
            <person name="Fujiwara S."/>
            <person name="Tachiki A."/>
            <person name="Miyachi S."/>
        </authorList>
    </citation>
    <scope>NUCLEOTIDE SEQUENCE [GENOMIC DNA]</scope>
    <source>
        <strain>IAM C-9</strain>
    </source>
</reference>
<reference key="4">
    <citation type="journal article" date="1990" name="Eur. J. Biochem.">
        <title>Subunit constitution of carbonic anhydrase from Chlamydomonas reinhardtii.</title>
        <authorList>
            <person name="Kamo T."/>
            <person name="Shimogawara K."/>
            <person name="Fukuzawa H."/>
            <person name="Muto S."/>
            <person name="Miyachi S."/>
        </authorList>
    </citation>
    <scope>PROTEIN SEQUENCE OF 21-37 AND 341-377</scope>
</reference>
<reference key="5">
    <citation type="journal article" date="1993" name="Eur. J. Biochem.">
        <title>Structural analysis of periplasmic carbonic anhydrase 1 of Chlamydomonas reinhardtii.</title>
        <authorList>
            <person name="Ishida S."/>
            <person name="Muto S."/>
            <person name="Miyachi S."/>
        </authorList>
    </citation>
    <scope>PARTIAL PROTEIN SEQUENCE</scope>
    <scope>DISULFIDE BONDS</scope>
    <scope>GLYCOSYLATION AT ASN-101; ASN-135 AND ASN-297</scope>
</reference>
<keyword id="KW-0002">3D-structure</keyword>
<keyword id="KW-0903">Direct protein sequencing</keyword>
<keyword id="KW-1015">Disulfide bond</keyword>
<keyword id="KW-0325">Glycoprotein</keyword>
<keyword id="KW-0456">Lyase</keyword>
<keyword id="KW-0479">Metal-binding</keyword>
<keyword id="KW-0574">Periplasm</keyword>
<keyword id="KW-0732">Signal</keyword>
<keyword id="KW-0862">Zinc</keyword>
<protein>
    <recommendedName>
        <fullName>Carbonic anhydrase 1</fullName>
        <ecNumber>4.2.1.1</ecNumber>
    </recommendedName>
    <alternativeName>
        <fullName>Carbonate dehydratase 1</fullName>
        <shortName>CA1</shortName>
    </alternativeName>
    <component>
        <recommendedName>
            <fullName>Carbonic anhydrase 1 large chain</fullName>
        </recommendedName>
    </component>
    <component>
        <recommendedName>
            <fullName>Carbonic anhydrase 1 small chain</fullName>
        </recommendedName>
    </component>
</protein>
<sequence length="377" mass="41628">MARTGALLLVALALAGCAQACIYKFGTSPDSKATVSGDHWDHGLNGENWEGKDGAGNAWVCKTGRKQSPINVPQYQVLDGKGSKIANGLQTQWSYPDLMSNGTSVQVINNGHTIQVQWTYNYAGHATIAIPAMHNQTNRIVDVLEMRPNDAADRVTAVPTQFHFHSTSEHLLAGKIYPLELHIVHQVTEKLEACKGGCFSVTGILFQLDNGPDNELLEPIFANMPSREGTFSNLPAGTTIKLGELLPSDRDYVTYEGSLTTPPCSEGLLWHVMTQPQRISFGQWNRYRLAVGLKECNSTETAADAGHHHHHRRLLHNHAHLEEVPAATSEPKHYFRRVMLAESANPDAYTCKAVAFGQNFRNPQYANGRTIKLARYH</sequence>
<feature type="signal peptide" evidence="3">
    <location>
        <begin position="1"/>
        <end position="20"/>
    </location>
</feature>
<feature type="chain" id="PRO_0000004257" description="Carbonic anhydrase 1">
    <location>
        <begin position="21"/>
        <end position="377"/>
    </location>
</feature>
<feature type="chain" id="PRO_0000004258" description="Carbonic anhydrase 1 large chain">
    <location>
        <begin position="21"/>
        <end position="305"/>
    </location>
</feature>
<feature type="chain" id="PRO_0000004259" description="Carbonic anhydrase 1 small chain">
    <location>
        <begin position="341"/>
        <end position="377"/>
    </location>
</feature>
<feature type="domain" description="Alpha-carbonic anhydrase" evidence="2">
    <location>
        <begin position="38"/>
        <end position="318"/>
    </location>
</feature>
<feature type="active site" description="Proton acceptor" evidence="2">
    <location>
        <position position="112"/>
    </location>
</feature>
<feature type="binding site" evidence="2">
    <location>
        <position position="163"/>
    </location>
    <ligand>
        <name>Zn(2+)</name>
        <dbReference type="ChEBI" id="CHEBI:29105"/>
        <note>catalytic</note>
    </ligand>
</feature>
<feature type="binding site" evidence="2">
    <location>
        <position position="165"/>
    </location>
    <ligand>
        <name>Zn(2+)</name>
        <dbReference type="ChEBI" id="CHEBI:29105"/>
        <note>catalytic</note>
    </ligand>
</feature>
<feature type="binding site" evidence="2">
    <location>
        <position position="182"/>
    </location>
    <ligand>
        <name>Zn(2+)</name>
        <dbReference type="ChEBI" id="CHEBI:29105"/>
        <note>catalytic</note>
    </ligand>
</feature>
<feature type="binding site" evidence="1">
    <location>
        <begin position="260"/>
        <end position="261"/>
    </location>
    <ligand>
        <name>substrate</name>
    </ligand>
</feature>
<feature type="binding site" evidence="1">
    <location>
        <position position="260"/>
    </location>
    <ligand>
        <name>substrate</name>
    </ligand>
</feature>
<feature type="glycosylation site" description="N-linked (GlcNAc...) asparagine" evidence="4">
    <location>
        <position position="101"/>
    </location>
</feature>
<feature type="glycosylation site" description="N-linked (GlcNAc...) asparagine" evidence="4">
    <location>
        <position position="135"/>
    </location>
</feature>
<feature type="glycosylation site" description="N-linked (GlcNAc...) asparagine" evidence="4">
    <location>
        <position position="297"/>
    </location>
</feature>
<feature type="disulfide bond" description="Interchain" evidence="4">
    <location>
        <position position="21"/>
    </location>
</feature>
<feature type="disulfide bond" evidence="4">
    <location>
        <begin position="61"/>
        <end position="264"/>
    </location>
</feature>
<feature type="disulfide bond" evidence="4">
    <location>
        <begin position="194"/>
        <end position="198"/>
    </location>
</feature>
<feature type="disulfide bond" description="Interchain (between large and small chains)" evidence="4">
    <location>
        <begin position="296"/>
        <end position="351"/>
    </location>
</feature>
<feature type="strand" evidence="6">
    <location>
        <begin position="36"/>
        <end position="38"/>
    </location>
</feature>
<feature type="turn" evidence="6">
    <location>
        <begin position="43"/>
        <end position="48"/>
    </location>
</feature>
<feature type="turn" evidence="6">
    <location>
        <begin position="61"/>
        <end position="63"/>
    </location>
</feature>
<feature type="strand" evidence="6">
    <location>
        <begin position="70"/>
        <end position="72"/>
    </location>
</feature>
<feature type="helix" evidence="6">
    <location>
        <begin position="74"/>
        <end position="78"/>
    </location>
</feature>
<feature type="helix" evidence="6">
    <location>
        <begin position="87"/>
        <end position="89"/>
    </location>
</feature>
<feature type="strand" evidence="6">
    <location>
        <begin position="92"/>
        <end position="94"/>
    </location>
</feature>
<feature type="strand" evidence="6">
    <location>
        <begin position="101"/>
        <end position="109"/>
    </location>
</feature>
<feature type="strand" evidence="6">
    <location>
        <begin position="114"/>
        <end position="120"/>
    </location>
</feature>
<feature type="strand" evidence="6">
    <location>
        <begin position="125"/>
        <end position="133"/>
    </location>
</feature>
<feature type="helix" evidence="6">
    <location>
        <begin position="142"/>
        <end position="145"/>
    </location>
</feature>
<feature type="strand" evidence="6">
    <location>
        <begin position="152"/>
        <end position="167"/>
    </location>
</feature>
<feature type="strand" evidence="6">
    <location>
        <begin position="169"/>
        <end position="172"/>
    </location>
</feature>
<feature type="strand" evidence="6">
    <location>
        <begin position="178"/>
        <end position="187"/>
    </location>
</feature>
<feature type="helix" evidence="6">
    <location>
        <begin position="192"/>
        <end position="194"/>
    </location>
</feature>
<feature type="strand" evidence="6">
    <location>
        <begin position="198"/>
        <end position="212"/>
    </location>
</feature>
<feature type="turn" evidence="6">
    <location>
        <begin position="215"/>
        <end position="217"/>
    </location>
</feature>
<feature type="helix" evidence="6">
    <location>
        <begin position="218"/>
        <end position="221"/>
    </location>
</feature>
<feature type="strand" evidence="6">
    <location>
        <begin position="230"/>
        <end position="233"/>
    </location>
</feature>
<feature type="helix" evidence="6">
    <location>
        <begin position="242"/>
        <end position="245"/>
    </location>
</feature>
<feature type="strand" evidence="6">
    <location>
        <begin position="252"/>
        <end position="258"/>
    </location>
</feature>
<feature type="strand" evidence="6">
    <location>
        <begin position="266"/>
        <end position="275"/>
    </location>
</feature>
<feature type="strand" evidence="6">
    <location>
        <begin position="277"/>
        <end position="280"/>
    </location>
</feature>
<feature type="helix" evidence="6">
    <location>
        <begin position="281"/>
        <end position="290"/>
    </location>
</feature>
<feature type="strand" evidence="6">
    <location>
        <begin position="293"/>
        <end position="298"/>
    </location>
</feature>
<feature type="helix" evidence="6">
    <location>
        <begin position="346"/>
        <end position="348"/>
    </location>
</feature>
<feature type="strand" evidence="6">
    <location>
        <begin position="350"/>
        <end position="355"/>
    </location>
</feature>
<feature type="strand" evidence="6">
    <location>
        <begin position="371"/>
        <end position="374"/>
    </location>
</feature>